<keyword id="KW-0238">DNA-binding</keyword>
<keyword id="KW-0539">Nucleus</keyword>
<keyword id="KW-0597">Phosphoprotein</keyword>
<keyword id="KW-1185">Reference proteome</keyword>
<keyword id="KW-0677">Repeat</keyword>
<keyword id="KW-0804">Transcription</keyword>
<keyword id="KW-0805">Transcription regulation</keyword>
<protein>
    <recommendedName>
        <fullName>DNA-binding protein REB1</fullName>
    </recommendedName>
    <alternativeName>
        <fullName>QBP</fullName>
    </alternativeName>
</protein>
<sequence>MSQNDTNHESVEEAVFKYVGVGLEKSGEDDAVNKQKSVDWFLKEQDQDQDQDQDPGRDQDQEDNAKHRDANDVSAVAAAAVAAALSVKKRGRPSEQSSTGSSGKGSGSSGQNNKKSKKNKNKLHLAAVDPELASLDDNLVDGNDSEEQSHHQLVHKAIMDTDNIASQHPDFQQYLNTEDDQEPKKEKSEERSYGDLSNIDDHVDDVSVSGSIPSQVRLKKTAEVLPKVLSSESHNDDQQDDVSNLIQEAAAKASHIINPATQSNGKSFDESEEEALEQFIKEYQKIRGLSRRQICERIWSNERRKDDFWTNICRVLPYRTRSSIYKHVRRKYHIFEQRGKWTPEEDAELARWCAEKEGQWSNIGKVLGRMPEDCRDRWRNYVKCGPNRAANKWSVEEEEKLKNVIHQMLDNASTAYEDGEDDEMKDSSTKIEDSGDADMLDVQDSDKKPSISNSKKKPAAKDIINWTVVSEQMGGSRSRIQCRYKWNKLLKKEALNKIKNISDDDKFWLLTKLRDMGFTEDSQVDWEELSTLMPGRRWTGTELKLLYEKVRTTVRQYKRKTINVICKELVGYPEASLPLDDEIRQHHSGDDEDKD</sequence>
<evidence type="ECO:0000250" key="1"/>
<evidence type="ECO:0000255" key="2">
    <source>
        <dbReference type="PROSITE-ProRule" id="PRU00625"/>
    </source>
</evidence>
<evidence type="ECO:0000256" key="3">
    <source>
        <dbReference type="SAM" id="MobiDB-lite"/>
    </source>
</evidence>
<evidence type="ECO:0000305" key="4"/>
<feature type="chain" id="PRO_0000197090" description="DNA-binding protein REB1">
    <location>
        <begin position="1"/>
        <end position="595"/>
    </location>
</feature>
<feature type="domain" description="HTH myb-type" evidence="2">
    <location>
        <begin position="333"/>
        <end position="384"/>
    </location>
</feature>
<feature type="domain" description="Myb-like">
    <location>
        <begin position="385"/>
        <end position="490"/>
    </location>
</feature>
<feature type="DNA-binding region" description="H-T-H motif" evidence="2">
    <location>
        <begin position="360"/>
        <end position="382"/>
    </location>
</feature>
<feature type="region of interest" description="Disordered" evidence="3">
    <location>
        <begin position="25"/>
        <end position="208"/>
    </location>
</feature>
<feature type="region of interest" description="Disordered" evidence="3">
    <location>
        <begin position="414"/>
        <end position="456"/>
    </location>
</feature>
<feature type="compositionally biased region" description="Basic and acidic residues" evidence="3">
    <location>
        <begin position="25"/>
        <end position="46"/>
    </location>
</feature>
<feature type="compositionally biased region" description="Basic and acidic residues" evidence="3">
    <location>
        <begin position="54"/>
        <end position="71"/>
    </location>
</feature>
<feature type="compositionally biased region" description="Low complexity" evidence="3">
    <location>
        <begin position="75"/>
        <end position="84"/>
    </location>
</feature>
<feature type="compositionally biased region" description="Basic residues" evidence="3">
    <location>
        <begin position="114"/>
        <end position="123"/>
    </location>
</feature>
<feature type="compositionally biased region" description="Polar residues" evidence="3">
    <location>
        <begin position="163"/>
        <end position="176"/>
    </location>
</feature>
<feature type="compositionally biased region" description="Basic and acidic residues" evidence="3">
    <location>
        <begin position="182"/>
        <end position="205"/>
    </location>
</feature>
<feature type="compositionally biased region" description="Acidic residues" evidence="3">
    <location>
        <begin position="434"/>
        <end position="443"/>
    </location>
</feature>
<feature type="sequence conflict" description="In Ref. 1; AAA61343." evidence="4" ref="1">
    <original>DA</original>
    <variation>VV</variation>
    <location>
        <begin position="69"/>
        <end position="70"/>
    </location>
</feature>
<feature type="sequence conflict" description="In Ref. 1; AAA61343." evidence="4" ref="1">
    <original>A</original>
    <variation>R</variation>
    <location>
        <position position="78"/>
    </location>
</feature>
<name>REB1_KLULA</name>
<dbReference type="EMBL" id="L03789">
    <property type="protein sequence ID" value="AAA61343.1"/>
    <property type="molecule type" value="Genomic_DNA"/>
</dbReference>
<dbReference type="EMBL" id="CR382126">
    <property type="protein sequence ID" value="CAG97986.1"/>
    <property type="molecule type" value="Genomic_DNA"/>
</dbReference>
<dbReference type="PIR" id="A48077">
    <property type="entry name" value="A48077"/>
</dbReference>
<dbReference type="RefSeq" id="XP_455278.1">
    <property type="nucleotide sequence ID" value="XM_455278.1"/>
</dbReference>
<dbReference type="SMR" id="Q05950"/>
<dbReference type="FunCoup" id="Q05950">
    <property type="interactions" value="1402"/>
</dbReference>
<dbReference type="STRING" id="284590.Q05950"/>
<dbReference type="PaxDb" id="284590-Q05950"/>
<dbReference type="KEGG" id="kla:KLLA0_F04389g"/>
<dbReference type="eggNOG" id="KOG0051">
    <property type="taxonomic scope" value="Eukaryota"/>
</dbReference>
<dbReference type="HOGENOM" id="CLU_016706_0_0_1"/>
<dbReference type="InParanoid" id="Q05950"/>
<dbReference type="OMA" id="HVRRKYH"/>
<dbReference type="Proteomes" id="UP000000598">
    <property type="component" value="Chromosome F"/>
</dbReference>
<dbReference type="GO" id="GO:0005634">
    <property type="term" value="C:nucleus"/>
    <property type="evidence" value="ECO:0007669"/>
    <property type="project" value="UniProtKB-SubCell"/>
</dbReference>
<dbReference type="GO" id="GO:0003700">
    <property type="term" value="F:DNA-binding transcription factor activity"/>
    <property type="evidence" value="ECO:0007669"/>
    <property type="project" value="TreeGrafter"/>
</dbReference>
<dbReference type="GO" id="GO:0000976">
    <property type="term" value="F:transcription cis-regulatory region binding"/>
    <property type="evidence" value="ECO:0007669"/>
    <property type="project" value="TreeGrafter"/>
</dbReference>
<dbReference type="CDD" id="cd00167">
    <property type="entry name" value="SANT"/>
    <property type="match status" value="1"/>
</dbReference>
<dbReference type="FunFam" id="1.10.10.60:FF:000387">
    <property type="entry name" value="Replication termination factor 1"/>
    <property type="match status" value="1"/>
</dbReference>
<dbReference type="Gene3D" id="1.10.10.60">
    <property type="entry name" value="Homeodomain-like"/>
    <property type="match status" value="2"/>
</dbReference>
<dbReference type="InterPro" id="IPR051651">
    <property type="entry name" value="DMTF1_DNA-bind_reg"/>
</dbReference>
<dbReference type="InterPro" id="IPR009057">
    <property type="entry name" value="Homeodomain-like_sf"/>
</dbReference>
<dbReference type="InterPro" id="IPR017930">
    <property type="entry name" value="Myb_dom"/>
</dbReference>
<dbReference type="InterPro" id="IPR049260">
    <property type="entry name" value="REB1_MybAD"/>
</dbReference>
<dbReference type="InterPro" id="IPR001005">
    <property type="entry name" value="SANT/Myb"/>
</dbReference>
<dbReference type="PANTHER" id="PTHR46380">
    <property type="entry name" value="CYCLIN-D-BINDING MYB-LIKE TRANSCRIPTION FACTOR 1"/>
    <property type="match status" value="1"/>
</dbReference>
<dbReference type="PANTHER" id="PTHR46380:SF2">
    <property type="entry name" value="CYCLIN-D-BINDING MYB-LIKE TRANSCRIPTION FACTOR 1"/>
    <property type="match status" value="1"/>
</dbReference>
<dbReference type="Pfam" id="PF13921">
    <property type="entry name" value="Myb_DNA-bind_6"/>
    <property type="match status" value="1"/>
</dbReference>
<dbReference type="Pfam" id="PF21559">
    <property type="entry name" value="Reb1_MybAD"/>
    <property type="match status" value="1"/>
</dbReference>
<dbReference type="SMART" id="SM00717">
    <property type="entry name" value="SANT"/>
    <property type="match status" value="4"/>
</dbReference>
<dbReference type="SUPFAM" id="SSF46689">
    <property type="entry name" value="Homeodomain-like"/>
    <property type="match status" value="2"/>
</dbReference>
<dbReference type="PROSITE" id="PS51294">
    <property type="entry name" value="HTH_MYB"/>
    <property type="match status" value="1"/>
</dbReference>
<dbReference type="PROSITE" id="PS50090">
    <property type="entry name" value="MYB_LIKE"/>
    <property type="match status" value="1"/>
</dbReference>
<organism>
    <name type="scientific">Kluyveromyces lactis (strain ATCC 8585 / CBS 2359 / DSM 70799 / NBRC 1267 / NRRL Y-1140 / WM37)</name>
    <name type="common">Yeast</name>
    <name type="synonym">Candida sphaerica</name>
    <dbReference type="NCBI Taxonomy" id="284590"/>
    <lineage>
        <taxon>Eukaryota</taxon>
        <taxon>Fungi</taxon>
        <taxon>Dikarya</taxon>
        <taxon>Ascomycota</taxon>
        <taxon>Saccharomycotina</taxon>
        <taxon>Saccharomycetes</taxon>
        <taxon>Saccharomycetales</taxon>
        <taxon>Saccharomycetaceae</taxon>
        <taxon>Kluyveromyces</taxon>
    </lineage>
</organism>
<reference key="1">
    <citation type="journal article" date="1993" name="Mol. Cell. Biol.">
        <title>A bipartite DNA-binding domain in yeast Reb1p.</title>
        <authorList>
            <person name="Morrow B.E."/>
            <person name="Ju Q."/>
            <person name="Warner J.R."/>
        </authorList>
    </citation>
    <scope>NUCLEOTIDE SEQUENCE [GENOMIC DNA]</scope>
</reference>
<reference key="2">
    <citation type="journal article" date="2004" name="Nature">
        <title>Genome evolution in yeasts.</title>
        <authorList>
            <person name="Dujon B."/>
            <person name="Sherman D."/>
            <person name="Fischer G."/>
            <person name="Durrens P."/>
            <person name="Casaregola S."/>
            <person name="Lafontaine I."/>
            <person name="de Montigny J."/>
            <person name="Marck C."/>
            <person name="Neuveglise C."/>
            <person name="Talla E."/>
            <person name="Goffard N."/>
            <person name="Frangeul L."/>
            <person name="Aigle M."/>
            <person name="Anthouard V."/>
            <person name="Babour A."/>
            <person name="Barbe V."/>
            <person name="Barnay S."/>
            <person name="Blanchin S."/>
            <person name="Beckerich J.-M."/>
            <person name="Beyne E."/>
            <person name="Bleykasten C."/>
            <person name="Boisrame A."/>
            <person name="Boyer J."/>
            <person name="Cattolico L."/>
            <person name="Confanioleri F."/>
            <person name="de Daruvar A."/>
            <person name="Despons L."/>
            <person name="Fabre E."/>
            <person name="Fairhead C."/>
            <person name="Ferry-Dumazet H."/>
            <person name="Groppi A."/>
            <person name="Hantraye F."/>
            <person name="Hennequin C."/>
            <person name="Jauniaux N."/>
            <person name="Joyet P."/>
            <person name="Kachouri R."/>
            <person name="Kerrest A."/>
            <person name="Koszul R."/>
            <person name="Lemaire M."/>
            <person name="Lesur I."/>
            <person name="Ma L."/>
            <person name="Muller H."/>
            <person name="Nicaud J.-M."/>
            <person name="Nikolski M."/>
            <person name="Oztas S."/>
            <person name="Ozier-Kalogeropoulos O."/>
            <person name="Pellenz S."/>
            <person name="Potier S."/>
            <person name="Richard G.-F."/>
            <person name="Straub M.-L."/>
            <person name="Suleau A."/>
            <person name="Swennen D."/>
            <person name="Tekaia F."/>
            <person name="Wesolowski-Louvel M."/>
            <person name="Westhof E."/>
            <person name="Wirth B."/>
            <person name="Zeniou-Meyer M."/>
            <person name="Zivanovic Y."/>
            <person name="Bolotin-Fukuhara M."/>
            <person name="Thierry A."/>
            <person name="Bouchier C."/>
            <person name="Caudron B."/>
            <person name="Scarpelli C."/>
            <person name="Gaillardin C."/>
            <person name="Weissenbach J."/>
            <person name="Wincker P."/>
            <person name="Souciet J.-L."/>
        </authorList>
    </citation>
    <scope>NUCLEOTIDE SEQUENCE [LARGE SCALE GENOMIC DNA]</scope>
    <source>
        <strain>ATCC 8585 / CBS 2359 / DSM 70799 / NBRC 1267 / NRRL Y-1140 / WM37</strain>
    </source>
</reference>
<gene>
    <name type="primary">REB1</name>
    <name type="ordered locus">KLLA0F04389g</name>
</gene>
<accession>Q05950</accession>
<accession>Q6CLB1</accession>
<comment type="function">
    <text evidence="1">DNA-binding protein that recognizes sites within both the enhancer and the promoter of rRNA transcription, as well as upstream of many genes transcribed by RNA polymerase II. It is essential for cell growth. May stimulate or inhibit transcription. Specifically recognizes the sequence 5'-CCGGGTA-3' or 5'-CGGGTRR-3' (where R is any purine) (By similarity).</text>
</comment>
<comment type="subcellular location">
    <subcellularLocation>
        <location>Nucleus</location>
    </subcellularLocation>
</comment>
<proteinExistence type="inferred from homology"/>